<comment type="function">
    <text evidence="1 2 6 8 9">Membrane-associated protein that plays a role in the structural modulation of the actin cytoskeleton, chemotaxis, motility, cell adhesion, phagocytosis, and exocytosis through lipid sequestering and/or protein docking to membranes (PubMed:23704996, PubMed:36009319). Thus, exerts an influence on a plethora of physiological processes, such as embryonic development, tissue regeneration, neuronal plasticity, and inflammation. Sequesters phosphatidylinositol 4,5-bisphosphate (PIP2) at lipid rafts in the plasma membrane of quiescent cells, an action reversed by protein kinase C, ultimately inhibiting exocytosis (PubMed:23704996). During inflammation, promotes the migration and adhesion of inflammatory cells and the secretion of cytokines such as tumor necrosis factor (TNF), particularly in macrophages (PubMed:37949888). Plays an essential role in bacteria-induced intracellular reactive oxygen species (ROS) formation in the monocytic cell type. Participates in the regulation of neurite initiation and outgrowth by interacting with components of cellular machinery including CDC42 that regulates cell shape and process extension through modulation of the cytoskeleton (By similarity). Plays also a role in axon development by mediating docking and fusion of RAB10-positive vesicles with the plasma membrane (By similarity).</text>
</comment>
<comment type="subunit">
    <text evidence="1 2">Interacts with CDC42 (By similarity). Interacts with GTP-bound form of RAB10 (By similarity). Interacts with calmodulin/CALM1 (By similarity).</text>
</comment>
<comment type="subcellular location">
    <subcellularLocation>
        <location evidence="4">Cell membrane</location>
        <topology evidence="12">Lipid-anchor</topology>
    </subcellularLocation>
    <subcellularLocation>
        <location evidence="12">Cytoplasm</location>
        <location evidence="12">Cytoskeleton</location>
    </subcellularLocation>
    <subcellularLocation>
        <location evidence="4">Cytoplasm</location>
    </subcellularLocation>
    <text evidence="4">PKC-dependent phosphorylation displaces MARCKS from the cell membrane and subsequent dephosphorylation is accompanied by its reassociation with the membrane.</text>
</comment>
<comment type="tissue specificity">
    <text evidence="6">Detected in spermatozoa.</text>
</comment>
<comment type="induction">
    <text evidence="5 9">By TNF-alpha and LPS in monocytes.</text>
</comment>
<comment type="PTM">
    <text evidence="4 5 10">Phosphorylation by PKC displaces MARCKS from the membrane. It also inhibits the F-actin cross-linking activity. PKC-mediated phosphorylation increases 4 to 5-fold upon TNF-alpha or LPS induction.</text>
</comment>
<comment type="PTM">
    <text evidence="4 5">Myristoylated. A proper myristoylation is essential for the proper distribution to the plasma membrane.</text>
</comment>
<comment type="PTM">
    <text evidence="1">Acetylated at Lys-172 by KAT5; acetylation is required for its subsequent phosphorylation. Deacetylated by SIRT2.</text>
</comment>
<comment type="similarity">
    <text evidence="12">Belongs to the MARCKS family.</text>
</comment>
<comment type="online information" name="Atlas of Genetics and Cytogenetics in Oncology and Haematology">
    <link uri="https://atlasgeneticsoncology.org/gene/50926/MARCKS"/>
</comment>
<protein>
    <recommendedName>
        <fullName>Myristoylated alanine-rich C-kinase substrate</fullName>
        <shortName>MARCKS</shortName>
    </recommendedName>
    <alternativeName>
        <fullName>Protein kinase C substrate, 80 kDa protein, light chain</fullName>
        <shortName>80K-L protein</shortName>
        <shortName>PKCSL</shortName>
    </alternativeName>
</protein>
<gene>
    <name type="primary">MARCKS</name>
    <name type="synonym">MACS</name>
    <name type="synonym">PRKCSL</name>
</gene>
<organism>
    <name type="scientific">Homo sapiens</name>
    <name type="common">Human</name>
    <dbReference type="NCBI Taxonomy" id="9606"/>
    <lineage>
        <taxon>Eukaryota</taxon>
        <taxon>Metazoa</taxon>
        <taxon>Chordata</taxon>
        <taxon>Craniata</taxon>
        <taxon>Vertebrata</taxon>
        <taxon>Euteleostomi</taxon>
        <taxon>Mammalia</taxon>
        <taxon>Eutheria</taxon>
        <taxon>Euarchontoglires</taxon>
        <taxon>Primates</taxon>
        <taxon>Haplorrhini</taxon>
        <taxon>Catarrhini</taxon>
        <taxon>Hominidae</taxon>
        <taxon>Homo</taxon>
    </lineage>
</organism>
<reference key="1">
    <citation type="journal article" date="1991" name="J. Biol. Chem.">
        <title>The human myristoylated alanine-rich C kinase substrate (MARCKS) gene (MACS). Analysis of its gene product, promoter, and chromosomal localization.</title>
        <authorList>
            <person name="Harlan D.M."/>
            <person name="Graff J.M."/>
            <person name="Stumpo D.J."/>
            <person name="Eddy R.L. Jr."/>
            <person name="Shows T.B."/>
            <person name="Boyle J.M."/>
            <person name="Blackshear P.J."/>
        </authorList>
    </citation>
    <scope>NUCLEOTIDE SEQUENCE [MRNA]</scope>
    <scope>NUCLEOTIDE SEQUENCE [GENOMIC DNA] OF 1-34</scope>
</reference>
<reference key="2">
    <citation type="journal article" date="1992" name="Genomics">
        <title>Molecular cloning and chromosomal mapping of a cDNA encoding human 80K-L protein: major substrate for protein kinase C.</title>
        <authorList>
            <person name="Sakai K."/>
            <person name="Hirai M."/>
            <person name="Kudoh J."/>
            <person name="Minoshima S."/>
            <person name="Shimizu N."/>
        </authorList>
    </citation>
    <scope>NUCLEOTIDE SEQUENCE [MRNA]</scope>
</reference>
<reference key="3">
    <citation type="submission" date="2005-12" db="EMBL/GenBank/DDBJ databases">
        <authorList>
            <consortium name="NIEHS SNPs program"/>
        </authorList>
    </citation>
    <scope>NUCLEOTIDE SEQUENCE [GENOMIC DNA]</scope>
    <scope>VARIANTS LEU-250 AND VAL-274</scope>
</reference>
<reference key="4">
    <citation type="journal article" date="2003" name="Nature">
        <title>The DNA sequence and analysis of human chromosome 6.</title>
        <authorList>
            <person name="Mungall A.J."/>
            <person name="Palmer S.A."/>
            <person name="Sims S.K."/>
            <person name="Edwards C.A."/>
            <person name="Ashurst J.L."/>
            <person name="Wilming L."/>
            <person name="Jones M.C."/>
            <person name="Horton R."/>
            <person name="Hunt S.E."/>
            <person name="Scott C.E."/>
            <person name="Gilbert J.G.R."/>
            <person name="Clamp M.E."/>
            <person name="Bethel G."/>
            <person name="Milne S."/>
            <person name="Ainscough R."/>
            <person name="Almeida J.P."/>
            <person name="Ambrose K.D."/>
            <person name="Andrews T.D."/>
            <person name="Ashwell R.I.S."/>
            <person name="Babbage A.K."/>
            <person name="Bagguley C.L."/>
            <person name="Bailey J."/>
            <person name="Banerjee R."/>
            <person name="Barker D.J."/>
            <person name="Barlow K.F."/>
            <person name="Bates K."/>
            <person name="Beare D.M."/>
            <person name="Beasley H."/>
            <person name="Beasley O."/>
            <person name="Bird C.P."/>
            <person name="Blakey S.E."/>
            <person name="Bray-Allen S."/>
            <person name="Brook J."/>
            <person name="Brown A.J."/>
            <person name="Brown J.Y."/>
            <person name="Burford D.C."/>
            <person name="Burrill W."/>
            <person name="Burton J."/>
            <person name="Carder C."/>
            <person name="Carter N.P."/>
            <person name="Chapman J.C."/>
            <person name="Clark S.Y."/>
            <person name="Clark G."/>
            <person name="Clee C.M."/>
            <person name="Clegg S."/>
            <person name="Cobley V."/>
            <person name="Collier R.E."/>
            <person name="Collins J.E."/>
            <person name="Colman L.K."/>
            <person name="Corby N.R."/>
            <person name="Coville G.J."/>
            <person name="Culley K.M."/>
            <person name="Dhami P."/>
            <person name="Davies J."/>
            <person name="Dunn M."/>
            <person name="Earthrowl M.E."/>
            <person name="Ellington A.E."/>
            <person name="Evans K.A."/>
            <person name="Faulkner L."/>
            <person name="Francis M.D."/>
            <person name="Frankish A."/>
            <person name="Frankland J."/>
            <person name="French L."/>
            <person name="Garner P."/>
            <person name="Garnett J."/>
            <person name="Ghori M.J."/>
            <person name="Gilby L.M."/>
            <person name="Gillson C.J."/>
            <person name="Glithero R.J."/>
            <person name="Grafham D.V."/>
            <person name="Grant M."/>
            <person name="Gribble S."/>
            <person name="Griffiths C."/>
            <person name="Griffiths M.N.D."/>
            <person name="Hall R."/>
            <person name="Halls K.S."/>
            <person name="Hammond S."/>
            <person name="Harley J.L."/>
            <person name="Hart E.A."/>
            <person name="Heath P.D."/>
            <person name="Heathcott R."/>
            <person name="Holmes S.J."/>
            <person name="Howden P.J."/>
            <person name="Howe K.L."/>
            <person name="Howell G.R."/>
            <person name="Huckle E."/>
            <person name="Humphray S.J."/>
            <person name="Humphries M.D."/>
            <person name="Hunt A.R."/>
            <person name="Johnson C.M."/>
            <person name="Joy A.A."/>
            <person name="Kay M."/>
            <person name="Keenan S.J."/>
            <person name="Kimberley A.M."/>
            <person name="King A."/>
            <person name="Laird G.K."/>
            <person name="Langford C."/>
            <person name="Lawlor S."/>
            <person name="Leongamornlert D.A."/>
            <person name="Leversha M."/>
            <person name="Lloyd C.R."/>
            <person name="Lloyd D.M."/>
            <person name="Loveland J.E."/>
            <person name="Lovell J."/>
            <person name="Martin S."/>
            <person name="Mashreghi-Mohammadi M."/>
            <person name="Maslen G.L."/>
            <person name="Matthews L."/>
            <person name="McCann O.T."/>
            <person name="McLaren S.J."/>
            <person name="McLay K."/>
            <person name="McMurray A."/>
            <person name="Moore M.J.F."/>
            <person name="Mullikin J.C."/>
            <person name="Niblett D."/>
            <person name="Nickerson T."/>
            <person name="Novik K.L."/>
            <person name="Oliver K."/>
            <person name="Overton-Larty E.K."/>
            <person name="Parker A."/>
            <person name="Patel R."/>
            <person name="Pearce A.V."/>
            <person name="Peck A.I."/>
            <person name="Phillimore B.J.C.T."/>
            <person name="Phillips S."/>
            <person name="Plumb R.W."/>
            <person name="Porter K.M."/>
            <person name="Ramsey Y."/>
            <person name="Ranby S.A."/>
            <person name="Rice C.M."/>
            <person name="Ross M.T."/>
            <person name="Searle S.M."/>
            <person name="Sehra H.K."/>
            <person name="Sheridan E."/>
            <person name="Skuce C.D."/>
            <person name="Smith S."/>
            <person name="Smith M."/>
            <person name="Spraggon L."/>
            <person name="Squares S.L."/>
            <person name="Steward C.A."/>
            <person name="Sycamore N."/>
            <person name="Tamlyn-Hall G."/>
            <person name="Tester J."/>
            <person name="Theaker A.J."/>
            <person name="Thomas D.W."/>
            <person name="Thorpe A."/>
            <person name="Tracey A."/>
            <person name="Tromans A."/>
            <person name="Tubby B."/>
            <person name="Wall M."/>
            <person name="Wallis J.M."/>
            <person name="West A.P."/>
            <person name="White S.S."/>
            <person name="Whitehead S.L."/>
            <person name="Whittaker H."/>
            <person name="Wild A."/>
            <person name="Willey D.J."/>
            <person name="Wilmer T.E."/>
            <person name="Wood J.M."/>
            <person name="Wray P.W."/>
            <person name="Wyatt J.C."/>
            <person name="Young L."/>
            <person name="Younger R.M."/>
            <person name="Bentley D.R."/>
            <person name="Coulson A."/>
            <person name="Durbin R.M."/>
            <person name="Hubbard T."/>
            <person name="Sulston J.E."/>
            <person name="Dunham I."/>
            <person name="Rogers J."/>
            <person name="Beck S."/>
        </authorList>
    </citation>
    <scope>NUCLEOTIDE SEQUENCE [LARGE SCALE GENOMIC DNA]</scope>
</reference>
<reference key="5">
    <citation type="submission" date="2005-09" db="EMBL/GenBank/DDBJ databases">
        <authorList>
            <person name="Mural R.J."/>
            <person name="Istrail S."/>
            <person name="Sutton G.G."/>
            <person name="Florea L."/>
            <person name="Halpern A.L."/>
            <person name="Mobarry C.M."/>
            <person name="Lippert R."/>
            <person name="Walenz B."/>
            <person name="Shatkay H."/>
            <person name="Dew I."/>
            <person name="Miller J.R."/>
            <person name="Flanigan M.J."/>
            <person name="Edwards N.J."/>
            <person name="Bolanos R."/>
            <person name="Fasulo D."/>
            <person name="Halldorsson B.V."/>
            <person name="Hannenhalli S."/>
            <person name="Turner R."/>
            <person name="Yooseph S."/>
            <person name="Lu F."/>
            <person name="Nusskern D.R."/>
            <person name="Shue B.C."/>
            <person name="Zheng X.H."/>
            <person name="Zhong F."/>
            <person name="Delcher A.L."/>
            <person name="Huson D.H."/>
            <person name="Kravitz S.A."/>
            <person name="Mouchard L."/>
            <person name="Reinert K."/>
            <person name="Remington K.A."/>
            <person name="Clark A.G."/>
            <person name="Waterman M.S."/>
            <person name="Eichler E.E."/>
            <person name="Adams M.D."/>
            <person name="Hunkapiller M.W."/>
            <person name="Myers E.W."/>
            <person name="Venter J.C."/>
        </authorList>
    </citation>
    <scope>NUCLEOTIDE SEQUENCE [LARGE SCALE GENOMIC DNA]</scope>
</reference>
<reference key="6">
    <citation type="journal article" date="2004" name="Genome Res.">
        <title>The status, quality, and expansion of the NIH full-length cDNA project: the Mammalian Gene Collection (MGC).</title>
        <authorList>
            <consortium name="The MGC Project Team"/>
        </authorList>
    </citation>
    <scope>NUCLEOTIDE SEQUENCE [LARGE SCALE MRNA]</scope>
    <source>
        <tissue>Brain</tissue>
    </source>
</reference>
<reference key="7">
    <citation type="journal article" date="1992" name="Eur. J. Biochem.">
        <title>Relationship between the major protein kinase C substrates acidic 80-kDa protein-kinase-C substrate (80K) and myristoylated alanine-rich C-kinase substrate (MARCKS). Members of a gene family or equivalent genes in different species.</title>
        <authorList>
            <person name="Herget T."/>
            <person name="Brooks S.F."/>
            <person name="Broad S."/>
            <person name="Rozengurt E."/>
        </authorList>
    </citation>
    <scope>NUCLEOTIDE SEQUENCE [MRNA] OF 189-322</scope>
</reference>
<reference key="8">
    <citation type="journal article" date="1990" name="Proc. Natl. Acad. Sci. U.S.A.">
        <title>Tumor necrosis factor alpha modifies agonist-dependent responses in human neutrophils by inducing the synthesis and myristoylation of a specific protein kinase C substrate.</title>
        <authorList>
            <person name="Thelen M."/>
            <person name="Rosen A."/>
            <person name="Nairn A.C."/>
            <person name="Aderem A."/>
        </authorList>
    </citation>
    <scope>MYRISTOYLATION AT GLY-2</scope>
    <scope>PHOSPHORYLATION BY PKC</scope>
    <scope>INDUCTION BY TNF-ALPHA AND LPS</scope>
</reference>
<reference key="9">
    <citation type="journal article" date="1991" name="Nature">
        <title>Regulation by phosphorylation of reversible association of a myristoylated protein kinase C substrate with the plasma membrane.</title>
        <authorList>
            <person name="Thelen M."/>
            <person name="Rosen A."/>
            <person name="Nairn A.C."/>
            <person name="Aderem A."/>
        </authorList>
    </citation>
    <scope>MYRISTOYLATION AT GLY-2</scope>
    <scope>SUBCELLULAR LOCATION</scope>
    <scope>PHOSPHORYLATION BY PKC</scope>
</reference>
<reference key="10">
    <citation type="journal article" date="1996" name="FEBS Lett.">
        <title>PRK1 phosphorylates MARCKS at the PKC sites: serine 152, serine 156 and serine 163.</title>
        <authorList>
            <person name="Palmer R.H."/>
            <person name="Schonwasser D.C."/>
            <person name="Rahman D."/>
            <person name="Pappin D.J."/>
            <person name="Herget T."/>
            <person name="Parker P.J."/>
        </authorList>
    </citation>
    <scope>PHOSPHORYLATION AT SER-159; SER-163 AND SER-170</scope>
</reference>
<reference key="11">
    <citation type="journal article" date="2006" name="Cell">
        <title>Global, in vivo, and site-specific phosphorylation dynamics in signaling networks.</title>
        <authorList>
            <person name="Olsen J.V."/>
            <person name="Blagoev B."/>
            <person name="Gnad F."/>
            <person name="Macek B."/>
            <person name="Kumar C."/>
            <person name="Mortensen P."/>
            <person name="Mann M."/>
        </authorList>
    </citation>
    <scope>PHOSPHORYLATION [LARGE SCALE ANALYSIS] AT SER-46; SER-77; SER-101 AND SER-170</scope>
    <scope>IDENTIFICATION BY MASS SPECTROMETRY [LARGE SCALE ANALYSIS]</scope>
    <source>
        <tissue>Cervix carcinoma</tissue>
    </source>
</reference>
<reference key="12">
    <citation type="journal article" date="2007" name="J. Proteome Res.">
        <title>Improved titanium dioxide enrichment of phosphopeptides from HeLa cells and high confident phosphopeptide identification by cross-validation of MS/MS and MS/MS/MS spectra.</title>
        <authorList>
            <person name="Yu L.R."/>
            <person name="Zhu Z."/>
            <person name="Chan K.C."/>
            <person name="Issaq H.J."/>
            <person name="Dimitrov D.S."/>
            <person name="Veenstra T.D."/>
        </authorList>
    </citation>
    <scope>PHOSPHORYLATION [LARGE SCALE ANALYSIS] AT SER-167</scope>
    <scope>IDENTIFICATION BY MASS SPECTROMETRY [LARGE SCALE ANALYSIS]</scope>
    <source>
        <tissue>Cervix carcinoma</tissue>
    </source>
</reference>
<reference key="13">
    <citation type="journal article" date="2008" name="Proc. Natl. Acad. Sci. U.S.A.">
        <title>A quantitative atlas of mitotic phosphorylation.</title>
        <authorList>
            <person name="Dephoure N."/>
            <person name="Zhou C."/>
            <person name="Villen J."/>
            <person name="Beausoleil S.A."/>
            <person name="Bakalarski C.E."/>
            <person name="Elledge S.J."/>
            <person name="Gygi S.P."/>
        </authorList>
    </citation>
    <scope>PHOSPHORYLATION [LARGE SCALE ANALYSIS] AT SER-27; SER-46; SER-77; SER-81; SER-118; THR-143; SER-145 AND THR-150</scope>
    <scope>IDENTIFICATION BY MASS SPECTROMETRY [LARGE SCALE ANALYSIS]</scope>
    <source>
        <tissue>Cervix carcinoma</tissue>
    </source>
</reference>
<reference key="14">
    <citation type="journal article" date="2009" name="Anal. Chem.">
        <title>Lys-N and trypsin cover complementary parts of the phosphoproteome in a refined SCX-based approach.</title>
        <authorList>
            <person name="Gauci S."/>
            <person name="Helbig A.O."/>
            <person name="Slijper M."/>
            <person name="Krijgsveld J."/>
            <person name="Heck A.J."/>
            <person name="Mohammed S."/>
        </authorList>
    </citation>
    <scope>IDENTIFICATION BY MASS SPECTROMETRY [LARGE SCALE ANALYSIS]</scope>
</reference>
<reference key="15">
    <citation type="journal article" date="2010" name="Sci. Signal.">
        <title>Quantitative phosphoproteomics reveals widespread full phosphorylation site occupancy during mitosis.</title>
        <authorList>
            <person name="Olsen J.V."/>
            <person name="Vermeulen M."/>
            <person name="Santamaria A."/>
            <person name="Kumar C."/>
            <person name="Miller M.L."/>
            <person name="Jensen L.J."/>
            <person name="Gnad F."/>
            <person name="Cox J."/>
            <person name="Jensen T.S."/>
            <person name="Nigg E.A."/>
            <person name="Brunak S."/>
            <person name="Mann M."/>
        </authorList>
    </citation>
    <scope>PHOSPHORYLATION [LARGE SCALE ANALYSIS] AT SER-27; SER-46; SER-101; THR-150; SER-163; SER-167 AND SER-170</scope>
    <scope>IDENTIFICATION BY MASS SPECTROMETRY [LARGE SCALE ANALYSIS]</scope>
    <source>
        <tissue>Cervix carcinoma</tissue>
    </source>
</reference>
<reference key="16">
    <citation type="journal article" date="2011" name="BMC Syst. Biol.">
        <title>Initial characterization of the human central proteome.</title>
        <authorList>
            <person name="Burkard T.R."/>
            <person name="Planyavsky M."/>
            <person name="Kaupe I."/>
            <person name="Breitwieser F.P."/>
            <person name="Buerckstuemmer T."/>
            <person name="Bennett K.L."/>
            <person name="Superti-Furga G."/>
            <person name="Colinge J."/>
        </authorList>
    </citation>
    <scope>IDENTIFICATION BY MASS SPECTROMETRY [LARGE SCALE ANALYSIS]</scope>
</reference>
<reference key="17">
    <citation type="journal article" date="2011" name="Sci. Signal.">
        <title>System-wide temporal characterization of the proteome and phosphoproteome of human embryonic stem cell differentiation.</title>
        <authorList>
            <person name="Rigbolt K.T."/>
            <person name="Prokhorova T.A."/>
            <person name="Akimov V."/>
            <person name="Henningsen J."/>
            <person name="Johansen P.T."/>
            <person name="Kratchmarova I."/>
            <person name="Kassem M."/>
            <person name="Mann M."/>
            <person name="Olsen J.V."/>
            <person name="Blagoev B."/>
        </authorList>
    </citation>
    <scope>PHOSPHORYLATION [LARGE SCALE ANALYSIS] AT SER-46; SER-63; SER-77; SER-81; SER-101; THR-150; SER-163 AND SER-170</scope>
    <scope>IDENTIFICATION BY MASS SPECTROMETRY [LARGE SCALE ANALYSIS]</scope>
</reference>
<reference key="18">
    <citation type="journal article" date="2013" name="J. Proteome Res.">
        <title>Toward a comprehensive characterization of a human cancer cell phosphoproteome.</title>
        <authorList>
            <person name="Zhou H."/>
            <person name="Di Palma S."/>
            <person name="Preisinger C."/>
            <person name="Peng M."/>
            <person name="Polat A.N."/>
            <person name="Heck A.J."/>
            <person name="Mohammed S."/>
        </authorList>
    </citation>
    <scope>PHOSPHORYLATION [LARGE SCALE ANALYSIS] AT SER-27; SER-101; THR-150 AND SER-170</scope>
    <scope>IDENTIFICATION BY MASS SPECTROMETRY [LARGE SCALE ANALYSIS]</scope>
    <source>
        <tissue>Erythroleukemia</tissue>
    </source>
</reference>
<reference key="19">
    <citation type="journal article" date="2013" name="PLoS ONE">
        <title>MARCKS protein is phosphorylated and regulates calcium mobilization during human acrosomal exocytosis.</title>
        <authorList>
            <person name="Rodriguez Pena M.J."/>
            <person name="Castillo Bennett J.V."/>
            <person name="Soler O.M."/>
            <person name="Mayorga L.S."/>
            <person name="Michaut M.A."/>
        </authorList>
    </citation>
    <scope>FUNCTION</scope>
    <scope>TISSUE SPECIFICITY</scope>
    <scope>PHOSPHORYLATION</scope>
</reference>
<reference key="20">
    <citation type="journal article" date="2014" name="J. Proteomics">
        <title>An enzyme assisted RP-RPLC approach for in-depth analysis of human liver phosphoproteome.</title>
        <authorList>
            <person name="Bian Y."/>
            <person name="Song C."/>
            <person name="Cheng K."/>
            <person name="Dong M."/>
            <person name="Wang F."/>
            <person name="Huang J."/>
            <person name="Sun D."/>
            <person name="Wang L."/>
            <person name="Ye M."/>
            <person name="Zou H."/>
        </authorList>
    </citation>
    <scope>PHOSPHORYLATION [LARGE SCALE ANALYSIS] AT SER-26; SER-29; SER-101; SER-135; SER-145; SER-147; SER-170 AND SER-314</scope>
    <scope>IDENTIFICATION BY MASS SPECTROMETRY [LARGE SCALE ANALYSIS]</scope>
    <source>
        <tissue>Liver</tissue>
    </source>
</reference>
<reference key="21">
    <citation type="journal article" date="2014" name="Nat. Commun.">
        <title>Global profiling of co- and post-translationally N-myristoylated proteomes in human cells.</title>
        <authorList>
            <person name="Thinon E."/>
            <person name="Serwa R.A."/>
            <person name="Broncel M."/>
            <person name="Brannigan J.A."/>
            <person name="Brassat U."/>
            <person name="Wright M.H."/>
            <person name="Heal W.P."/>
            <person name="Wilkinson A.J."/>
            <person name="Mann D.J."/>
            <person name="Tate E.W."/>
        </authorList>
    </citation>
    <scope>MYRISTOYLATION AT GLY-2</scope>
    <scope>CLEAVAGE OF INITIATOR METHIONINE</scope>
    <scope>IDENTIFICATION BY MASS SPECTROMETRY</scope>
</reference>
<reference key="22">
    <citation type="journal article" date="2015" name="Proteomics">
        <title>N-terminome analysis of the human mitochondrial proteome.</title>
        <authorList>
            <person name="Vaca Jacome A.S."/>
            <person name="Rabilloud T."/>
            <person name="Schaeffer-Reiss C."/>
            <person name="Rompais M."/>
            <person name="Ayoub D."/>
            <person name="Lane L."/>
            <person name="Bairoch A."/>
            <person name="Van Dorsselaer A."/>
            <person name="Carapito C."/>
        </authorList>
    </citation>
    <scope>IDENTIFICATION BY MASS SPECTROMETRY [LARGE SCALE ANALYSIS]</scope>
</reference>
<reference key="23">
    <citation type="journal article" date="2022" name="Antioxidants">
        <title>MARCKS Is an Essential Regulator of Reactive Oxygen Species Production in the Monocytic Cell Type.</title>
        <authorList>
            <person name="Huber R."/>
            <person name="Diekmann M."/>
            <person name="Hoffmeister L."/>
            <person name="Kuehl F."/>
            <person name="Welz B."/>
            <person name="Brand K."/>
        </authorList>
    </citation>
    <scope>FUNCTION</scope>
</reference>
<reference key="24">
    <citation type="journal article" date="2023" name="Sci. Rep.">
        <title>Myristoylated, alanine-rich C-kinase substrate (MARCKS) regulates toll-like receptor 4 signaling in macrophages.</title>
        <authorList>
            <person name="Issara-Amphorn J."/>
            <person name="Sjoelund V.H."/>
            <person name="Smelkinson M."/>
            <person name="Montalvo S."/>
            <person name="Yoon S.H."/>
            <person name="Manes N.P."/>
            <person name="Nita-Lazar A."/>
        </authorList>
    </citation>
    <scope>FUNCTION</scope>
    <scope>INDUCTION BY LPS</scope>
</reference>
<feature type="initiator methionine" description="Removed" evidence="7">
    <location>
        <position position="1"/>
    </location>
</feature>
<feature type="chain" id="PRO_0000157148" description="Myristoylated alanine-rich C-kinase substrate">
    <location>
        <begin position="2"/>
        <end position="332"/>
    </location>
</feature>
<feature type="region of interest" description="Disordered" evidence="3">
    <location>
        <begin position="1"/>
        <end position="332"/>
    </location>
</feature>
<feature type="region of interest" description="Calmodulin-binding (PSD)">
    <location>
        <begin position="152"/>
        <end position="176"/>
    </location>
</feature>
<feature type="compositionally biased region" description="Polar residues" evidence="3">
    <location>
        <begin position="26"/>
        <end position="35"/>
    </location>
</feature>
<feature type="compositionally biased region" description="Low complexity" evidence="3">
    <location>
        <begin position="73"/>
        <end position="102"/>
    </location>
</feature>
<feature type="compositionally biased region" description="Low complexity" evidence="3">
    <location>
        <begin position="110"/>
        <end position="136"/>
    </location>
</feature>
<feature type="compositionally biased region" description="Basic residues" evidence="3">
    <location>
        <begin position="152"/>
        <end position="164"/>
    </location>
</feature>
<feature type="compositionally biased region" description="Low complexity" evidence="3">
    <location>
        <begin position="197"/>
        <end position="227"/>
    </location>
</feature>
<feature type="compositionally biased region" description="Basic and acidic residues" evidence="3">
    <location>
        <begin position="250"/>
        <end position="271"/>
    </location>
</feature>
<feature type="compositionally biased region" description="Low complexity" evidence="3">
    <location>
        <begin position="272"/>
        <end position="332"/>
    </location>
</feature>
<feature type="modified residue" description="Phosphoserine" evidence="19">
    <location>
        <position position="26"/>
    </location>
</feature>
<feature type="modified residue" description="Phosphoserine" evidence="15 16 18">
    <location>
        <position position="27"/>
    </location>
</feature>
<feature type="modified residue" description="Phosphoserine" evidence="19">
    <location>
        <position position="29"/>
    </location>
</feature>
<feature type="modified residue" description="Phosphoserine" evidence="13 15 16 17">
    <location>
        <position position="46"/>
    </location>
</feature>
<feature type="modified residue" description="Phosphoserine" evidence="17">
    <location>
        <position position="63"/>
    </location>
</feature>
<feature type="modified residue" description="Phosphoserine" evidence="13 15 17">
    <location>
        <position position="77"/>
    </location>
</feature>
<feature type="modified residue" description="Phosphoserine" evidence="15 17">
    <location>
        <position position="81"/>
    </location>
</feature>
<feature type="modified residue" description="Phosphoserine" evidence="13 16 17 18 19">
    <location>
        <position position="101"/>
    </location>
</feature>
<feature type="modified residue" description="Phosphoserine" evidence="15">
    <location>
        <position position="118"/>
    </location>
</feature>
<feature type="modified residue" description="Phosphoserine" evidence="2">
    <location>
        <position position="128"/>
    </location>
</feature>
<feature type="modified residue" description="Phosphoserine" evidence="19">
    <location>
        <position position="135"/>
    </location>
</feature>
<feature type="modified residue" description="Phosphothreonine" evidence="15">
    <location>
        <position position="143"/>
    </location>
</feature>
<feature type="modified residue" description="Phosphoserine" evidence="15 19">
    <location>
        <position position="145"/>
    </location>
</feature>
<feature type="modified residue" description="Phosphoserine" evidence="19">
    <location>
        <position position="147"/>
    </location>
</feature>
<feature type="modified residue" description="Phosphothreonine" evidence="15 16 17 18">
    <location>
        <position position="150"/>
    </location>
</feature>
<feature type="modified residue" description="Phosphoserine; by PKC" evidence="10">
    <location>
        <position position="159"/>
    </location>
</feature>
<feature type="modified residue" description="Phosphoserine; by PKC" evidence="10 16 17">
    <location>
        <position position="163"/>
    </location>
</feature>
<feature type="modified residue" description="Phosphoserine; by PKC" evidence="14 16">
    <location>
        <position position="167"/>
    </location>
</feature>
<feature type="modified residue" description="Phosphoserine; by PKC" evidence="10 13 16 17 18 19">
    <location>
        <position position="170"/>
    </location>
</feature>
<feature type="modified residue" description="N6-acetyllysine" evidence="1">
    <location>
        <position position="172"/>
    </location>
</feature>
<feature type="modified residue" description="Phosphoserine" evidence="1">
    <location>
        <position position="262"/>
    </location>
</feature>
<feature type="modified residue" description="Phosphoserine" evidence="19">
    <location>
        <position position="314"/>
    </location>
</feature>
<feature type="lipid moiety-binding region" description="N-myristoyl glycine" evidence="4 5 7">
    <location>
        <position position="2"/>
    </location>
</feature>
<feature type="sequence variant" id="VAR_025825" description="In dbSNP:rs45593337." evidence="11">
    <original>P</original>
    <variation>L</variation>
    <location>
        <position position="250"/>
    </location>
</feature>
<feature type="sequence variant" id="VAR_025826" description="In dbSNP:rs3734458." evidence="11">
    <original>A</original>
    <variation>V</variation>
    <location>
        <position position="274"/>
    </location>
</feature>
<feature type="sequence conflict" description="In Ref. 2; BAA01392." evidence="12" ref="2">
    <original>A</original>
    <variation>S</variation>
    <location>
        <position position="84"/>
    </location>
</feature>
<feature type="sequence conflict" description="In Ref. 2; BAA01392." evidence="12" ref="2">
    <original>P</original>
    <variation>A</variation>
    <location>
        <position position="119"/>
    </location>
</feature>
<feature type="sequence conflict" description="In Ref. 7." evidence="12" ref="7">
    <original>G</original>
    <variation>R</variation>
    <location>
        <position position="225"/>
    </location>
</feature>
<feature type="sequence conflict" description="In Ref. 1; AAA59555." evidence="12" ref="1">
    <original>P</original>
    <variation>S</variation>
    <location>
        <position position="234"/>
    </location>
</feature>
<feature type="sequence conflict" description="In Ref. 7." evidence="12" ref="7">
    <original>Q</original>
    <variation>E</variation>
    <location>
        <position position="235"/>
    </location>
</feature>
<feature type="sequence conflict" description="In Ref. 1; AAA59555." evidence="12" ref="1">
    <original>PGAPPEQEAAPAEEPAAAAASS</original>
    <variation>LVCPRRGGSPRGGARGRRSLNQ</variation>
    <location>
        <begin position="287"/>
        <end position="308"/>
    </location>
</feature>
<sequence length="332" mass="31555">MGAQFSKTAAKGEAAAERPGEAAVASSPSKANGQENGHVKVNGDASPAAAESGAKEELQANGSAPAADKEEPAAAGSGAASPSAAEKGEPAAAAAPEAGASPVEKEAPAEGEAAEPGSPTAAEGEAASAASSTSSPKAEDGATPSPSNETPKKKKKRFSFKKSFKLSGFSFKKNKKEAGEGGEAEAPAAEGGKDEAAGGAAAAAAEAGAASGEQAAAPGEEAAAGEEGAAGGDPQEAKPQEAAVAPEKPPASDETKAAEEPSKVEEKKAEEAGASAAACEAPSAAGPGAPPEQEAAPAEEPAAAAASSACAAPSQEAQPECSPEAPPAEAAE</sequence>
<accession>P29966</accession>
<accession>E1P560</accession>
<accession>Q2LA83</accession>
<accession>Q5TDB7</accession>
<proteinExistence type="evidence at protein level"/>
<evidence type="ECO:0000250" key="1">
    <source>
        <dbReference type="UniProtKB" id="P26645"/>
    </source>
</evidence>
<evidence type="ECO:0000250" key="2">
    <source>
        <dbReference type="UniProtKB" id="P30009"/>
    </source>
</evidence>
<evidence type="ECO:0000256" key="3">
    <source>
        <dbReference type="SAM" id="MobiDB-lite"/>
    </source>
</evidence>
<evidence type="ECO:0000269" key="4">
    <source>
    </source>
</evidence>
<evidence type="ECO:0000269" key="5">
    <source>
    </source>
</evidence>
<evidence type="ECO:0000269" key="6">
    <source>
    </source>
</evidence>
<evidence type="ECO:0000269" key="7">
    <source>
    </source>
</evidence>
<evidence type="ECO:0000269" key="8">
    <source>
    </source>
</evidence>
<evidence type="ECO:0000269" key="9">
    <source>
    </source>
</evidence>
<evidence type="ECO:0000269" key="10">
    <source>
    </source>
</evidence>
<evidence type="ECO:0000269" key="11">
    <source ref="3"/>
</evidence>
<evidence type="ECO:0000305" key="12"/>
<evidence type="ECO:0007744" key="13">
    <source>
    </source>
</evidence>
<evidence type="ECO:0007744" key="14">
    <source>
    </source>
</evidence>
<evidence type="ECO:0007744" key="15">
    <source>
    </source>
</evidence>
<evidence type="ECO:0007744" key="16">
    <source>
    </source>
</evidence>
<evidence type="ECO:0007744" key="17">
    <source>
    </source>
</evidence>
<evidence type="ECO:0007744" key="18">
    <source>
    </source>
</evidence>
<evidence type="ECO:0007744" key="19">
    <source>
    </source>
</evidence>
<dbReference type="EMBL" id="M68956">
    <property type="protein sequence ID" value="AAA59555.1"/>
    <property type="molecule type" value="mRNA"/>
</dbReference>
<dbReference type="EMBL" id="M68955">
    <property type="protein sequence ID" value="AAA59554.1"/>
    <property type="molecule type" value="Genomic_DNA"/>
</dbReference>
<dbReference type="EMBL" id="D10522">
    <property type="protein sequence ID" value="BAA01392.1"/>
    <property type="molecule type" value="mRNA"/>
</dbReference>
<dbReference type="EMBL" id="DQ341274">
    <property type="protein sequence ID" value="ABC67467.1"/>
    <property type="molecule type" value="Genomic_DNA"/>
</dbReference>
<dbReference type="EMBL" id="AL132660">
    <property type="protein sequence ID" value="CAI19942.1"/>
    <property type="molecule type" value="Genomic_DNA"/>
</dbReference>
<dbReference type="EMBL" id="CH471051">
    <property type="protein sequence ID" value="EAW48258.1"/>
    <property type="molecule type" value="Genomic_DNA"/>
</dbReference>
<dbReference type="EMBL" id="CH471051">
    <property type="protein sequence ID" value="EAW48259.1"/>
    <property type="molecule type" value="Genomic_DNA"/>
</dbReference>
<dbReference type="EMBL" id="BC089040">
    <property type="protein sequence ID" value="AAH89040.1"/>
    <property type="molecule type" value="mRNA"/>
</dbReference>
<dbReference type="CCDS" id="CCDS5101.1"/>
<dbReference type="PIR" id="A38873">
    <property type="entry name" value="A38873"/>
</dbReference>
<dbReference type="RefSeq" id="NP_002347.5">
    <property type="nucleotide sequence ID" value="NM_002356.6"/>
</dbReference>
<dbReference type="SMR" id="P29966"/>
<dbReference type="BioGRID" id="110257">
    <property type="interactions" value="625"/>
</dbReference>
<dbReference type="ELM" id="P29966"/>
<dbReference type="FunCoup" id="P29966">
    <property type="interactions" value="786"/>
</dbReference>
<dbReference type="IntAct" id="P29966">
    <property type="interactions" value="43"/>
</dbReference>
<dbReference type="MINT" id="P29966"/>
<dbReference type="STRING" id="9606.ENSP00000478061"/>
<dbReference type="ChEMBL" id="CHEMBL4804244"/>
<dbReference type="DrugBank" id="DB14886">
    <property type="generic name" value="BIO-11006"/>
</dbReference>
<dbReference type="GlyGen" id="P29966">
    <property type="glycosylation" value="2 sites, 1 O-linked glycan (1 site)"/>
</dbReference>
<dbReference type="iPTMnet" id="P29966"/>
<dbReference type="PhosphoSitePlus" id="P29966"/>
<dbReference type="SwissPalm" id="P29966"/>
<dbReference type="BioMuta" id="MARCKS"/>
<dbReference type="DMDM" id="76803798"/>
<dbReference type="CPTAC" id="CPTAC-976"/>
<dbReference type="jPOST" id="P29966"/>
<dbReference type="MassIVE" id="P29966"/>
<dbReference type="PaxDb" id="9606-ENSP00000478061"/>
<dbReference type="PeptideAtlas" id="P29966"/>
<dbReference type="ProteomicsDB" id="54612"/>
<dbReference type="Pumba" id="P29966"/>
<dbReference type="TopDownProteomics" id="P29966"/>
<dbReference type="Antibodypedia" id="72851">
    <property type="antibodies" value="903 antibodies from 42 providers"/>
</dbReference>
<dbReference type="DNASU" id="4082"/>
<dbReference type="Ensembl" id="ENST00000612661.2">
    <property type="protein sequence ID" value="ENSP00000478061.1"/>
    <property type="gene ID" value="ENSG00000277443.3"/>
</dbReference>
<dbReference type="GeneID" id="4082"/>
<dbReference type="KEGG" id="hsa:4082"/>
<dbReference type="MANE-Select" id="ENST00000612661.2">
    <property type="protein sequence ID" value="ENSP00000478061.1"/>
    <property type="RefSeq nucleotide sequence ID" value="NM_002356.7"/>
    <property type="RefSeq protein sequence ID" value="NP_002347.5"/>
</dbReference>
<dbReference type="UCSC" id="uc032xir.2">
    <property type="organism name" value="human"/>
</dbReference>
<dbReference type="AGR" id="HGNC:6759"/>
<dbReference type="CTD" id="4082"/>
<dbReference type="DisGeNET" id="4082"/>
<dbReference type="GeneCards" id="MARCKS"/>
<dbReference type="HGNC" id="HGNC:6759">
    <property type="gene designation" value="MARCKS"/>
</dbReference>
<dbReference type="HPA" id="ENSG00000277443">
    <property type="expression patterns" value="Low tissue specificity"/>
</dbReference>
<dbReference type="MIM" id="177061">
    <property type="type" value="gene"/>
</dbReference>
<dbReference type="neXtProt" id="NX_P29966"/>
<dbReference type="OpenTargets" id="ENSG00000277443"/>
<dbReference type="PharmGKB" id="PA30637"/>
<dbReference type="VEuPathDB" id="HostDB:ENSG00000277443"/>
<dbReference type="eggNOG" id="ENOG502RB4V">
    <property type="taxonomic scope" value="Eukaryota"/>
</dbReference>
<dbReference type="GeneTree" id="ENSGT00730000111419"/>
<dbReference type="HOGENOM" id="CLU_073091_0_0_1"/>
<dbReference type="InParanoid" id="P29966"/>
<dbReference type="OMA" id="CKPNGQE"/>
<dbReference type="OrthoDB" id="9950867at2759"/>
<dbReference type="PAN-GO" id="P29966">
    <property type="GO annotations" value="6 GO annotations based on evolutionary models"/>
</dbReference>
<dbReference type="TreeFam" id="TF332815"/>
<dbReference type="PathwayCommons" id="P29966"/>
<dbReference type="Reactome" id="R-HSA-399997">
    <property type="pathway name" value="Acetylcholine regulates insulin secretion"/>
</dbReference>
<dbReference type="SignaLink" id="P29966"/>
<dbReference type="SIGNOR" id="P29966"/>
<dbReference type="BioGRID-ORCS" id="4082">
    <property type="hits" value="24 hits in 1165 CRISPR screens"/>
</dbReference>
<dbReference type="CD-CODE" id="8C2F96ED">
    <property type="entry name" value="Centrosome"/>
</dbReference>
<dbReference type="ChiTaRS" id="MARCKS">
    <property type="organism name" value="human"/>
</dbReference>
<dbReference type="EvolutionaryTrace" id="P29966"/>
<dbReference type="GeneWiki" id="MARCKS"/>
<dbReference type="GenomeRNAi" id="4082"/>
<dbReference type="Pharos" id="P29966">
    <property type="development level" value="Tbio"/>
</dbReference>
<dbReference type="PRO" id="PR:P29966"/>
<dbReference type="Proteomes" id="UP000005640">
    <property type="component" value="Chromosome 6"/>
</dbReference>
<dbReference type="RNAct" id="P29966">
    <property type="molecule type" value="protein"/>
</dbReference>
<dbReference type="Bgee" id="ENSG00000277443">
    <property type="expression patterns" value="Expressed in ventricular zone and 209 other cell types or tissues"/>
</dbReference>
<dbReference type="GO" id="GO:0015629">
    <property type="term" value="C:actin cytoskeleton"/>
    <property type="evidence" value="ECO:0000304"/>
    <property type="project" value="ProtInc"/>
</dbReference>
<dbReference type="GO" id="GO:0032432">
    <property type="term" value="C:actin filament bundle"/>
    <property type="evidence" value="ECO:0000318"/>
    <property type="project" value="GO_Central"/>
</dbReference>
<dbReference type="GO" id="GO:0005938">
    <property type="term" value="C:cell cortex"/>
    <property type="evidence" value="ECO:0007669"/>
    <property type="project" value="Ensembl"/>
</dbReference>
<dbReference type="GO" id="GO:0030054">
    <property type="term" value="C:cell junction"/>
    <property type="evidence" value="ECO:0000314"/>
    <property type="project" value="HPA"/>
</dbReference>
<dbReference type="GO" id="GO:0005813">
    <property type="term" value="C:centrosome"/>
    <property type="evidence" value="ECO:0007669"/>
    <property type="project" value="Ensembl"/>
</dbReference>
<dbReference type="GO" id="GO:0005929">
    <property type="term" value="C:cilium"/>
    <property type="evidence" value="ECO:0000314"/>
    <property type="project" value="HPA"/>
</dbReference>
<dbReference type="GO" id="GO:0005737">
    <property type="term" value="C:cytoplasm"/>
    <property type="evidence" value="ECO:0000318"/>
    <property type="project" value="GO_Central"/>
</dbReference>
<dbReference type="GO" id="GO:0005829">
    <property type="term" value="C:cytosol"/>
    <property type="evidence" value="ECO:0000314"/>
    <property type="project" value="HPA"/>
</dbReference>
<dbReference type="GO" id="GO:0005783">
    <property type="term" value="C:endoplasmic reticulum"/>
    <property type="evidence" value="ECO:0000314"/>
    <property type="project" value="HPA"/>
</dbReference>
<dbReference type="GO" id="GO:0070062">
    <property type="term" value="C:extracellular exosome"/>
    <property type="evidence" value="ECO:0007005"/>
    <property type="project" value="UniProtKB"/>
</dbReference>
<dbReference type="GO" id="GO:0005925">
    <property type="term" value="C:focal adhesion"/>
    <property type="evidence" value="ECO:0007005"/>
    <property type="project" value="UniProtKB"/>
</dbReference>
<dbReference type="GO" id="GO:0042585">
    <property type="term" value="C:germinal vesicle"/>
    <property type="evidence" value="ECO:0007669"/>
    <property type="project" value="Ensembl"/>
</dbReference>
<dbReference type="GO" id="GO:0016607">
    <property type="term" value="C:nuclear speck"/>
    <property type="evidence" value="ECO:0000314"/>
    <property type="project" value="HPA"/>
</dbReference>
<dbReference type="GO" id="GO:0005654">
    <property type="term" value="C:nucleoplasm"/>
    <property type="evidence" value="ECO:0000314"/>
    <property type="project" value="HPA"/>
</dbReference>
<dbReference type="GO" id="GO:0005886">
    <property type="term" value="C:plasma membrane"/>
    <property type="evidence" value="ECO:0000314"/>
    <property type="project" value="HPA"/>
</dbReference>
<dbReference type="GO" id="GO:0051015">
    <property type="term" value="F:actin filament binding"/>
    <property type="evidence" value="ECO:0000318"/>
    <property type="project" value="GO_Central"/>
</dbReference>
<dbReference type="GO" id="GO:0005516">
    <property type="term" value="F:calmodulin binding"/>
    <property type="evidence" value="ECO:0000304"/>
    <property type="project" value="ProtInc"/>
</dbReference>
<dbReference type="GO" id="GO:0042802">
    <property type="term" value="F:identical protein binding"/>
    <property type="evidence" value="ECO:0007669"/>
    <property type="project" value="Ensembl"/>
</dbReference>
<dbReference type="GO" id="GO:0005080">
    <property type="term" value="F:protein kinase C binding"/>
    <property type="evidence" value="ECO:0007669"/>
    <property type="project" value="Ensembl"/>
</dbReference>
<dbReference type="GO" id="GO:0051764">
    <property type="term" value="P:actin crosslink formation"/>
    <property type="evidence" value="ECO:0007669"/>
    <property type="project" value="Ensembl"/>
</dbReference>
<dbReference type="GO" id="GO:0051017">
    <property type="term" value="P:actin filament bundle assembly"/>
    <property type="evidence" value="ECO:0007669"/>
    <property type="project" value="Ensembl"/>
</dbReference>
<dbReference type="GO" id="GO:0007015">
    <property type="term" value="P:actin filament organization"/>
    <property type="evidence" value="ECO:0000318"/>
    <property type="project" value="GO_Central"/>
</dbReference>
<dbReference type="GO" id="GO:0006915">
    <property type="term" value="P:apoptotic process"/>
    <property type="evidence" value="ECO:0007669"/>
    <property type="project" value="Ensembl"/>
</dbReference>
<dbReference type="GO" id="GO:0007417">
    <property type="term" value="P:central nervous system development"/>
    <property type="evidence" value="ECO:0000318"/>
    <property type="project" value="GO_Central"/>
</dbReference>
<dbReference type="GO" id="GO:0007005">
    <property type="term" value="P:mitochondrion organization"/>
    <property type="evidence" value="ECO:0007669"/>
    <property type="project" value="Ensembl"/>
</dbReference>
<dbReference type="GO" id="GO:0021915">
    <property type="term" value="P:neural tube development"/>
    <property type="evidence" value="ECO:0007669"/>
    <property type="project" value="Ensembl"/>
</dbReference>
<dbReference type="GO" id="GO:0022008">
    <property type="term" value="P:neurogenesis"/>
    <property type="evidence" value="ECO:0007669"/>
    <property type="project" value="Ensembl"/>
</dbReference>
<dbReference type="GO" id="GO:0034976">
    <property type="term" value="P:response to endoplasmic reticulum stress"/>
    <property type="evidence" value="ECO:0007669"/>
    <property type="project" value="Ensembl"/>
</dbReference>
<dbReference type="InterPro" id="IPR002101">
    <property type="entry name" value="MARCKS"/>
</dbReference>
<dbReference type="PANTHER" id="PTHR14353:SF9">
    <property type="entry name" value="MYRISTOYLATED ALANINE-RICH C-KINASE SUBSTRATE"/>
    <property type="match status" value="1"/>
</dbReference>
<dbReference type="PANTHER" id="PTHR14353">
    <property type="entry name" value="MYRISTOYLATED ALANINE-RICH C-KINASE SUBSTRATE MARCKS"/>
    <property type="match status" value="1"/>
</dbReference>
<dbReference type="Pfam" id="PF02063">
    <property type="entry name" value="MARCKS"/>
    <property type="match status" value="1"/>
</dbReference>
<dbReference type="PRINTS" id="PR00963">
    <property type="entry name" value="MARCKS"/>
</dbReference>
<dbReference type="PROSITE" id="PS00826">
    <property type="entry name" value="MARCKS_1"/>
    <property type="match status" value="1"/>
</dbReference>
<dbReference type="PROSITE" id="PS00827">
    <property type="entry name" value="MARCKS_2"/>
    <property type="match status" value="1"/>
</dbReference>
<keyword id="KW-0007">Acetylation</keyword>
<keyword id="KW-0009">Actin-binding</keyword>
<keyword id="KW-0112">Calmodulin-binding</keyword>
<keyword id="KW-1003">Cell membrane</keyword>
<keyword id="KW-0963">Cytoplasm</keyword>
<keyword id="KW-0206">Cytoskeleton</keyword>
<keyword id="KW-0449">Lipoprotein</keyword>
<keyword id="KW-0472">Membrane</keyword>
<keyword id="KW-0519">Myristate</keyword>
<keyword id="KW-0597">Phosphoprotein</keyword>
<keyword id="KW-1267">Proteomics identification</keyword>
<keyword id="KW-1185">Reference proteome</keyword>
<name>MARCS_HUMAN</name>